<proteinExistence type="inferred from homology"/>
<comment type="function">
    <text evidence="1">The RuvA-RuvB-RuvC complex processes Holliday junction (HJ) DNA during genetic recombination and DNA repair, while the RuvA-RuvB complex plays an important role in the rescue of blocked DNA replication forks via replication fork reversal (RFR). RuvA specifically binds to HJ cruciform DNA, conferring on it an open structure. The RuvB hexamer acts as an ATP-dependent pump, pulling dsDNA into and through the RuvAB complex. HJ branch migration allows RuvC to scan DNA until it finds its consensus sequence, where it cleaves and resolves the cruciform DNA.</text>
</comment>
<comment type="subunit">
    <text evidence="1">Homotetramer. Forms an RuvA(8)-RuvB(12)-Holliday junction (HJ) complex. HJ DNA is sandwiched between 2 RuvA tetramers; dsDNA enters through RuvA and exits via RuvB. An RuvB hexamer assembles on each DNA strand where it exits the tetramer. Each RuvB hexamer is contacted by two RuvA subunits (via domain III) on 2 adjacent RuvB subunits; this complex drives branch migration. In the full resolvosome a probable DNA-RuvA(4)-RuvB(12)-RuvC(2) complex forms which resolves the HJ.</text>
</comment>
<comment type="subcellular location">
    <subcellularLocation>
        <location evidence="1">Cytoplasm</location>
    </subcellularLocation>
</comment>
<comment type="domain">
    <text evidence="1">Has three domains with a flexible linker between the domains II and III and assumes an 'L' shape. Domain III is highly mobile and contacts RuvB.</text>
</comment>
<comment type="similarity">
    <text evidence="1">Belongs to the RuvA family.</text>
</comment>
<feature type="chain" id="PRO_1000116446" description="Holliday junction branch migration complex subunit RuvA">
    <location>
        <begin position="1"/>
        <end position="197"/>
    </location>
</feature>
<feature type="region of interest" description="Domain I" evidence="1">
    <location>
        <begin position="1"/>
        <end position="63"/>
    </location>
</feature>
<feature type="region of interest" description="Domain II" evidence="1">
    <location>
        <begin position="64"/>
        <end position="142"/>
    </location>
</feature>
<feature type="region of interest" description="Flexible linker" evidence="1">
    <location>
        <begin position="143"/>
        <end position="149"/>
    </location>
</feature>
<feature type="region of interest" description="Domain III" evidence="1">
    <location>
        <begin position="149"/>
        <end position="197"/>
    </location>
</feature>
<dbReference type="EMBL" id="CP000922">
    <property type="protein sequence ID" value="ACJ33090.1"/>
    <property type="molecule type" value="Genomic_DNA"/>
</dbReference>
<dbReference type="RefSeq" id="WP_012574393.1">
    <property type="nucleotide sequence ID" value="NC_011567.1"/>
</dbReference>
<dbReference type="SMR" id="B7GFM6"/>
<dbReference type="STRING" id="491915.Aflv_0711"/>
<dbReference type="GeneID" id="7036968"/>
<dbReference type="KEGG" id="afl:Aflv_0711"/>
<dbReference type="PATRIC" id="fig|491915.6.peg.727"/>
<dbReference type="eggNOG" id="COG0632">
    <property type="taxonomic scope" value="Bacteria"/>
</dbReference>
<dbReference type="HOGENOM" id="CLU_087936_1_0_9"/>
<dbReference type="Proteomes" id="UP000000742">
    <property type="component" value="Chromosome"/>
</dbReference>
<dbReference type="GO" id="GO:0005737">
    <property type="term" value="C:cytoplasm"/>
    <property type="evidence" value="ECO:0007669"/>
    <property type="project" value="UniProtKB-SubCell"/>
</dbReference>
<dbReference type="GO" id="GO:0009379">
    <property type="term" value="C:Holliday junction helicase complex"/>
    <property type="evidence" value="ECO:0007669"/>
    <property type="project" value="InterPro"/>
</dbReference>
<dbReference type="GO" id="GO:0048476">
    <property type="term" value="C:Holliday junction resolvase complex"/>
    <property type="evidence" value="ECO:0007669"/>
    <property type="project" value="UniProtKB-UniRule"/>
</dbReference>
<dbReference type="GO" id="GO:0005524">
    <property type="term" value="F:ATP binding"/>
    <property type="evidence" value="ECO:0007669"/>
    <property type="project" value="InterPro"/>
</dbReference>
<dbReference type="GO" id="GO:0000400">
    <property type="term" value="F:four-way junction DNA binding"/>
    <property type="evidence" value="ECO:0007669"/>
    <property type="project" value="UniProtKB-UniRule"/>
</dbReference>
<dbReference type="GO" id="GO:0009378">
    <property type="term" value="F:four-way junction helicase activity"/>
    <property type="evidence" value="ECO:0007669"/>
    <property type="project" value="InterPro"/>
</dbReference>
<dbReference type="GO" id="GO:0006310">
    <property type="term" value="P:DNA recombination"/>
    <property type="evidence" value="ECO:0007669"/>
    <property type="project" value="UniProtKB-UniRule"/>
</dbReference>
<dbReference type="GO" id="GO:0006281">
    <property type="term" value="P:DNA repair"/>
    <property type="evidence" value="ECO:0007669"/>
    <property type="project" value="UniProtKB-UniRule"/>
</dbReference>
<dbReference type="CDD" id="cd14332">
    <property type="entry name" value="UBA_RuvA_C"/>
    <property type="match status" value="1"/>
</dbReference>
<dbReference type="Gene3D" id="1.10.150.20">
    <property type="entry name" value="5' to 3' exonuclease, C-terminal subdomain"/>
    <property type="match status" value="1"/>
</dbReference>
<dbReference type="Gene3D" id="1.10.8.10">
    <property type="entry name" value="DNA helicase RuvA subunit, C-terminal domain"/>
    <property type="match status" value="1"/>
</dbReference>
<dbReference type="Gene3D" id="2.40.50.140">
    <property type="entry name" value="Nucleic acid-binding proteins"/>
    <property type="match status" value="1"/>
</dbReference>
<dbReference type="HAMAP" id="MF_00031">
    <property type="entry name" value="DNA_HJ_migration_RuvA"/>
    <property type="match status" value="1"/>
</dbReference>
<dbReference type="InterPro" id="IPR013849">
    <property type="entry name" value="DNA_helicase_Holl-junc_RuvA_I"/>
</dbReference>
<dbReference type="InterPro" id="IPR003583">
    <property type="entry name" value="Hlx-hairpin-Hlx_DNA-bd_motif"/>
</dbReference>
<dbReference type="InterPro" id="IPR012340">
    <property type="entry name" value="NA-bd_OB-fold"/>
</dbReference>
<dbReference type="InterPro" id="IPR000085">
    <property type="entry name" value="RuvA"/>
</dbReference>
<dbReference type="InterPro" id="IPR010994">
    <property type="entry name" value="RuvA_2-like"/>
</dbReference>
<dbReference type="InterPro" id="IPR011114">
    <property type="entry name" value="RuvA_C"/>
</dbReference>
<dbReference type="InterPro" id="IPR036267">
    <property type="entry name" value="RuvA_C_sf"/>
</dbReference>
<dbReference type="NCBIfam" id="TIGR00084">
    <property type="entry name" value="ruvA"/>
    <property type="match status" value="1"/>
</dbReference>
<dbReference type="Pfam" id="PF14520">
    <property type="entry name" value="HHH_5"/>
    <property type="match status" value="1"/>
</dbReference>
<dbReference type="Pfam" id="PF07499">
    <property type="entry name" value="RuvA_C"/>
    <property type="match status" value="1"/>
</dbReference>
<dbReference type="Pfam" id="PF01330">
    <property type="entry name" value="RuvA_N"/>
    <property type="match status" value="1"/>
</dbReference>
<dbReference type="SMART" id="SM00278">
    <property type="entry name" value="HhH1"/>
    <property type="match status" value="2"/>
</dbReference>
<dbReference type="SUPFAM" id="SSF46929">
    <property type="entry name" value="DNA helicase RuvA subunit, C-terminal domain"/>
    <property type="match status" value="1"/>
</dbReference>
<dbReference type="SUPFAM" id="SSF50249">
    <property type="entry name" value="Nucleic acid-binding proteins"/>
    <property type="match status" value="1"/>
</dbReference>
<dbReference type="SUPFAM" id="SSF47781">
    <property type="entry name" value="RuvA domain 2-like"/>
    <property type="match status" value="1"/>
</dbReference>
<protein>
    <recommendedName>
        <fullName evidence="1">Holliday junction branch migration complex subunit RuvA</fullName>
    </recommendedName>
</protein>
<gene>
    <name evidence="1" type="primary">ruvA</name>
    <name type="ordered locus">Aflv_0711</name>
</gene>
<name>RUVA_ANOFW</name>
<keyword id="KW-0963">Cytoplasm</keyword>
<keyword id="KW-0227">DNA damage</keyword>
<keyword id="KW-0233">DNA recombination</keyword>
<keyword id="KW-0234">DNA repair</keyword>
<keyword id="KW-0238">DNA-binding</keyword>
<reference key="1">
    <citation type="journal article" date="2008" name="Genome Biol.">
        <title>Encapsulated in silica: genome, proteome and physiology of the thermophilic bacterium Anoxybacillus flavithermus WK1.</title>
        <authorList>
            <person name="Saw J.H."/>
            <person name="Mountain B.W."/>
            <person name="Feng L."/>
            <person name="Omelchenko M.V."/>
            <person name="Hou S."/>
            <person name="Saito J.A."/>
            <person name="Stott M.B."/>
            <person name="Li D."/>
            <person name="Zhao G."/>
            <person name="Wu J."/>
            <person name="Galperin M.Y."/>
            <person name="Koonin E.V."/>
            <person name="Makarova K.S."/>
            <person name="Wolf Y.I."/>
            <person name="Rigden D.J."/>
            <person name="Dunfield P.F."/>
            <person name="Wang L."/>
            <person name="Alam M."/>
        </authorList>
    </citation>
    <scope>NUCLEOTIDE SEQUENCE [LARGE SCALE GENOMIC DNA]</scope>
    <source>
        <strain>DSM 21510 / WK1</strain>
    </source>
</reference>
<sequence length="197" mass="22297">MIEFIRGYVDYVCPEYVVIENNGVGYQIFTPNPFSFQMNKQQQIVVYTYQYVREDVLALYGFHTRQERMLFAKLLQVSGIGPKGALAILAAGQLEQLVEAIEAENDQFLCKFPGVGKKTARQMILDLKGKLQAIVPDAFPNLFTEPLEETNALSEAIEALKALGYADKEIQKVVPMLRQERLSTEGYIKLALQKLLK</sequence>
<organism>
    <name type="scientific">Anoxybacillus flavithermus (strain DSM 21510 / WK1)</name>
    <dbReference type="NCBI Taxonomy" id="491915"/>
    <lineage>
        <taxon>Bacteria</taxon>
        <taxon>Bacillati</taxon>
        <taxon>Bacillota</taxon>
        <taxon>Bacilli</taxon>
        <taxon>Bacillales</taxon>
        <taxon>Anoxybacillaceae</taxon>
        <taxon>Anoxybacillus</taxon>
    </lineage>
</organism>
<accession>B7GFM6</accession>
<evidence type="ECO:0000255" key="1">
    <source>
        <dbReference type="HAMAP-Rule" id="MF_00031"/>
    </source>
</evidence>